<sequence>MAMNLLNTASIAKEMQTKVTERMGDWFEAEFKAKANSASRRTRLIRSHGHTYTYARYQNTGQLSSNLKQVKKGDKIVVNAGTRANYTSGYHGMYFLVEKKGMQDVKTTLKKGANYANSMKL</sequence>
<accession>O21878</accession>
<comment type="function">
    <text evidence="1">Plays an essential role in tail assembly by capping the rapidly polymerizing tail once it has reached its requisite length and serving as the interaction surface for the connector and the tail tube proteins.</text>
</comment>
<comment type="subunit">
    <text evidence="1">Homohexamer. Interacts with the tail tube protein.</text>
</comment>
<comment type="subcellular location">
    <subcellularLocation>
        <location evidence="1">Virion</location>
    </subcellularLocation>
    <text evidence="1">Located at the interface with the connector and the tail tube.</text>
</comment>
<comment type="similarity">
    <text evidence="2">Belongs to the Skunalikevirus tail terminator protein family.</text>
</comment>
<keyword id="KW-1185">Reference proteome</keyword>
<keyword id="KW-1188">Viral release from host cell</keyword>
<keyword id="KW-1245">Viral tail assembly</keyword>
<keyword id="KW-1227">Viral tail protein</keyword>
<keyword id="KW-0946">Virion</keyword>
<organism>
    <name type="scientific">Lactococcus phage SK1</name>
    <name type="common">Lactococcus lactis bacteriophage SK1</name>
    <dbReference type="NCBI Taxonomy" id="2905675"/>
    <lineage>
        <taxon>Viruses</taxon>
        <taxon>Duplodnaviria</taxon>
        <taxon>Heunggongvirae</taxon>
        <taxon>Uroviricota</taxon>
        <taxon>Caudoviricetes</taxon>
        <taxon>Skunavirus</taxon>
        <taxon>Skunavirus sk1</taxon>
    </lineage>
</organism>
<dbReference type="EMBL" id="AF011378">
    <property type="protein sequence ID" value="AAB70049.1"/>
    <property type="molecule type" value="Genomic_DNA"/>
</dbReference>
<dbReference type="RefSeq" id="NP_044956.1">
    <property type="nucleotide sequence ID" value="NC_001835.1"/>
</dbReference>
<dbReference type="SMR" id="O21878"/>
<dbReference type="GeneID" id="1261274"/>
<dbReference type="KEGG" id="vg:1261274"/>
<dbReference type="Proteomes" id="UP000000839">
    <property type="component" value="Genome"/>
</dbReference>
<dbReference type="GO" id="GO:0098015">
    <property type="term" value="C:virus tail"/>
    <property type="evidence" value="ECO:0007669"/>
    <property type="project" value="UniProtKB-KW"/>
</dbReference>
<dbReference type="GO" id="GO:0098003">
    <property type="term" value="P:viral tail assembly"/>
    <property type="evidence" value="ECO:0007669"/>
    <property type="project" value="UniProtKB-KW"/>
</dbReference>
<evidence type="ECO:0000250" key="1">
    <source>
        <dbReference type="UniProtKB" id="D3WAC9"/>
    </source>
</evidence>
<evidence type="ECO:0000305" key="2"/>
<proteinExistence type="inferred from homology"/>
<reference key="1">
    <citation type="journal article" date="1997" name="Mol. Microbiol.">
        <title>Analysis of the DNA sequence, gene expression, origin of replication and modular structure of the Lactococcus lactis lytic bacteriophage sk1.</title>
        <authorList>
            <person name="Chandry P.S."/>
            <person name="Moore S.C."/>
            <person name="Boyce J.D."/>
            <person name="Davidson B.E."/>
            <person name="Hillier A.J."/>
        </authorList>
    </citation>
    <scope>NUCLEOTIDE SEQUENCE [LARGE SCALE GENOMIC DNA]</scope>
</reference>
<protein>
    <recommendedName>
        <fullName evidence="1">Probable tail terminator protein</fullName>
    </recommendedName>
    <alternativeName>
        <fullName evidence="2">Gene product 10</fullName>
        <shortName evidence="2">gp10</shortName>
    </alternativeName>
</protein>
<organismHost>
    <name type="scientific">Lactococcus lactis</name>
    <dbReference type="NCBI Taxonomy" id="1358"/>
</organismHost>
<name>TTTP_BPLSK</name>
<feature type="chain" id="PRO_0000438255" description="Probable tail terminator protein">
    <location>
        <begin position="1"/>
        <end position="121"/>
    </location>
</feature>